<feature type="chain" id="PRO_1000015676" description="Elongation factor Tu">
    <location>
        <begin position="1"/>
        <end position="395"/>
    </location>
</feature>
<feature type="domain" description="tr-type G">
    <location>
        <begin position="10"/>
        <end position="204"/>
    </location>
</feature>
<feature type="region of interest" description="G1" evidence="1">
    <location>
        <begin position="19"/>
        <end position="26"/>
    </location>
</feature>
<feature type="region of interest" description="G2" evidence="1">
    <location>
        <begin position="60"/>
        <end position="64"/>
    </location>
</feature>
<feature type="region of interest" description="G3" evidence="1">
    <location>
        <begin position="81"/>
        <end position="84"/>
    </location>
</feature>
<feature type="region of interest" description="G4" evidence="1">
    <location>
        <begin position="136"/>
        <end position="139"/>
    </location>
</feature>
<feature type="region of interest" description="G5" evidence="1">
    <location>
        <begin position="174"/>
        <end position="176"/>
    </location>
</feature>
<feature type="binding site" evidence="2">
    <location>
        <begin position="19"/>
        <end position="26"/>
    </location>
    <ligand>
        <name>GTP</name>
        <dbReference type="ChEBI" id="CHEBI:37565"/>
    </ligand>
</feature>
<feature type="binding site" evidence="2">
    <location>
        <position position="26"/>
    </location>
    <ligand>
        <name>Mg(2+)</name>
        <dbReference type="ChEBI" id="CHEBI:18420"/>
    </ligand>
</feature>
<feature type="binding site" evidence="2">
    <location>
        <begin position="81"/>
        <end position="85"/>
    </location>
    <ligand>
        <name>GTP</name>
        <dbReference type="ChEBI" id="CHEBI:37565"/>
    </ligand>
</feature>
<feature type="binding site" evidence="2">
    <location>
        <begin position="136"/>
        <end position="139"/>
    </location>
    <ligand>
        <name>GTP</name>
        <dbReference type="ChEBI" id="CHEBI:37565"/>
    </ligand>
</feature>
<reference key="1">
    <citation type="journal article" date="2007" name="J. Bacteriol.">
        <title>The complete genome sequence of the lactic acid bacterial paradigm Lactococcus lactis subsp. cremoris MG1363.</title>
        <authorList>
            <person name="Wegmann U."/>
            <person name="O'Connell-Motherway M."/>
            <person name="Zomer A."/>
            <person name="Buist G."/>
            <person name="Shearman C."/>
            <person name="Canchaya C."/>
            <person name="Ventura M."/>
            <person name="Goesmann A."/>
            <person name="Gasson M.J."/>
            <person name="Kuipers O.P."/>
            <person name="van Sinderen D."/>
            <person name="Kok J."/>
        </authorList>
    </citation>
    <scope>NUCLEOTIDE SEQUENCE [LARGE SCALE GENOMIC DNA]</scope>
    <source>
        <strain>MG1363</strain>
    </source>
</reference>
<sequence>MAKEVYDRSKPHVNIGTIGHVDHGKTTLSAAISKVLSDKGYSKATDFASIDAAPEERERGITINTAHIEYETEKRHYAHIDAPGHADYVKNMITGAAQMDGAILVVAATDGPMPQTREHILLSRQVGVKYLIVFLNKADLVDDEELMELVEMEVRDLLSEYDFPGDDIPVIAGSALGALNGEPQWVAKVEELMDIVDEYIPTPERDTDKPLLLPVEDVFSITGRGTVASGRIERGTVKVGDEVEIVGIKEETKKAVVTGIEMFRKTLTEGLAGDNVGALLRGIQRDEIERGQVIAKPGSITPHKLFEGEVYVLSKEEGGRHTPFFDNYRPQFYFHTTDVTGSVKLPEGTEMVMPGDNVHIDVELIHPVAIEQGTTFSIREGGRTVGSGIVAEIKA</sequence>
<keyword id="KW-0963">Cytoplasm</keyword>
<keyword id="KW-0251">Elongation factor</keyword>
<keyword id="KW-0342">GTP-binding</keyword>
<keyword id="KW-0378">Hydrolase</keyword>
<keyword id="KW-0460">Magnesium</keyword>
<keyword id="KW-0479">Metal-binding</keyword>
<keyword id="KW-0547">Nucleotide-binding</keyword>
<keyword id="KW-0648">Protein biosynthesis</keyword>
<gene>
    <name evidence="2" type="primary">tuf</name>
    <name type="ordered locus">llmg_2050</name>
</gene>
<accession>A2RMT1</accession>
<name>EFTU_LACLM</name>
<protein>
    <recommendedName>
        <fullName evidence="2">Elongation factor Tu</fullName>
        <shortName evidence="2">EF-Tu</shortName>
        <ecNumber evidence="2">3.6.5.3</ecNumber>
    </recommendedName>
</protein>
<organism>
    <name type="scientific">Lactococcus lactis subsp. cremoris (strain MG1363)</name>
    <dbReference type="NCBI Taxonomy" id="416870"/>
    <lineage>
        <taxon>Bacteria</taxon>
        <taxon>Bacillati</taxon>
        <taxon>Bacillota</taxon>
        <taxon>Bacilli</taxon>
        <taxon>Lactobacillales</taxon>
        <taxon>Streptococcaceae</taxon>
        <taxon>Lactococcus</taxon>
        <taxon>Lactococcus cremoris subsp. cremoris</taxon>
    </lineage>
</organism>
<evidence type="ECO:0000250" key="1"/>
<evidence type="ECO:0000255" key="2">
    <source>
        <dbReference type="HAMAP-Rule" id="MF_00118"/>
    </source>
</evidence>
<dbReference type="EC" id="3.6.5.3" evidence="2"/>
<dbReference type="EMBL" id="AM406671">
    <property type="protein sequence ID" value="CAL98617.1"/>
    <property type="molecule type" value="Genomic_DNA"/>
</dbReference>
<dbReference type="RefSeq" id="WP_003132374.1">
    <property type="nucleotide sequence ID" value="NZ_WJVF01000004.1"/>
</dbReference>
<dbReference type="SMR" id="A2RMT1"/>
<dbReference type="STRING" id="416870.llmg_2050"/>
<dbReference type="GeneID" id="89634082"/>
<dbReference type="KEGG" id="llm:llmg_2050"/>
<dbReference type="eggNOG" id="COG0050">
    <property type="taxonomic scope" value="Bacteria"/>
</dbReference>
<dbReference type="HOGENOM" id="CLU_007265_0_1_9"/>
<dbReference type="OrthoDB" id="9804504at2"/>
<dbReference type="PhylomeDB" id="A2RMT1"/>
<dbReference type="Proteomes" id="UP000000364">
    <property type="component" value="Chromosome"/>
</dbReference>
<dbReference type="GO" id="GO:0005829">
    <property type="term" value="C:cytosol"/>
    <property type="evidence" value="ECO:0007669"/>
    <property type="project" value="TreeGrafter"/>
</dbReference>
<dbReference type="GO" id="GO:0005525">
    <property type="term" value="F:GTP binding"/>
    <property type="evidence" value="ECO:0007669"/>
    <property type="project" value="UniProtKB-UniRule"/>
</dbReference>
<dbReference type="GO" id="GO:0003924">
    <property type="term" value="F:GTPase activity"/>
    <property type="evidence" value="ECO:0007669"/>
    <property type="project" value="InterPro"/>
</dbReference>
<dbReference type="GO" id="GO:0003746">
    <property type="term" value="F:translation elongation factor activity"/>
    <property type="evidence" value="ECO:0007669"/>
    <property type="project" value="UniProtKB-UniRule"/>
</dbReference>
<dbReference type="CDD" id="cd01884">
    <property type="entry name" value="EF_Tu"/>
    <property type="match status" value="1"/>
</dbReference>
<dbReference type="CDD" id="cd03697">
    <property type="entry name" value="EFTU_II"/>
    <property type="match status" value="1"/>
</dbReference>
<dbReference type="CDD" id="cd03707">
    <property type="entry name" value="EFTU_III"/>
    <property type="match status" value="1"/>
</dbReference>
<dbReference type="FunFam" id="2.40.30.10:FF:000001">
    <property type="entry name" value="Elongation factor Tu"/>
    <property type="match status" value="1"/>
</dbReference>
<dbReference type="FunFam" id="3.40.50.300:FF:000003">
    <property type="entry name" value="Elongation factor Tu"/>
    <property type="match status" value="1"/>
</dbReference>
<dbReference type="Gene3D" id="3.40.50.300">
    <property type="entry name" value="P-loop containing nucleotide triphosphate hydrolases"/>
    <property type="match status" value="1"/>
</dbReference>
<dbReference type="Gene3D" id="2.40.30.10">
    <property type="entry name" value="Translation factors"/>
    <property type="match status" value="2"/>
</dbReference>
<dbReference type="HAMAP" id="MF_00118_B">
    <property type="entry name" value="EF_Tu_B"/>
    <property type="match status" value="1"/>
</dbReference>
<dbReference type="InterPro" id="IPR041709">
    <property type="entry name" value="EF-Tu_GTP-bd"/>
</dbReference>
<dbReference type="InterPro" id="IPR050055">
    <property type="entry name" value="EF-Tu_GTPase"/>
</dbReference>
<dbReference type="InterPro" id="IPR004161">
    <property type="entry name" value="EFTu-like_2"/>
</dbReference>
<dbReference type="InterPro" id="IPR033720">
    <property type="entry name" value="EFTU_2"/>
</dbReference>
<dbReference type="InterPro" id="IPR031157">
    <property type="entry name" value="G_TR_CS"/>
</dbReference>
<dbReference type="InterPro" id="IPR027417">
    <property type="entry name" value="P-loop_NTPase"/>
</dbReference>
<dbReference type="InterPro" id="IPR005225">
    <property type="entry name" value="Small_GTP-bd"/>
</dbReference>
<dbReference type="InterPro" id="IPR000795">
    <property type="entry name" value="T_Tr_GTP-bd_dom"/>
</dbReference>
<dbReference type="InterPro" id="IPR009000">
    <property type="entry name" value="Transl_B-barrel_sf"/>
</dbReference>
<dbReference type="InterPro" id="IPR009001">
    <property type="entry name" value="Transl_elong_EF1A/Init_IF2_C"/>
</dbReference>
<dbReference type="InterPro" id="IPR004541">
    <property type="entry name" value="Transl_elong_EFTu/EF1A_bac/org"/>
</dbReference>
<dbReference type="InterPro" id="IPR004160">
    <property type="entry name" value="Transl_elong_EFTu/EF1A_C"/>
</dbReference>
<dbReference type="NCBIfam" id="TIGR00485">
    <property type="entry name" value="EF-Tu"/>
    <property type="match status" value="1"/>
</dbReference>
<dbReference type="NCBIfam" id="NF000766">
    <property type="entry name" value="PRK00049.1"/>
    <property type="match status" value="1"/>
</dbReference>
<dbReference type="NCBIfam" id="NF009372">
    <property type="entry name" value="PRK12735.1"/>
    <property type="match status" value="1"/>
</dbReference>
<dbReference type="NCBIfam" id="NF009373">
    <property type="entry name" value="PRK12736.1"/>
    <property type="match status" value="1"/>
</dbReference>
<dbReference type="NCBIfam" id="TIGR00231">
    <property type="entry name" value="small_GTP"/>
    <property type="match status" value="1"/>
</dbReference>
<dbReference type="PANTHER" id="PTHR43721:SF22">
    <property type="entry name" value="ELONGATION FACTOR TU, MITOCHONDRIAL"/>
    <property type="match status" value="1"/>
</dbReference>
<dbReference type="PANTHER" id="PTHR43721">
    <property type="entry name" value="ELONGATION FACTOR TU-RELATED"/>
    <property type="match status" value="1"/>
</dbReference>
<dbReference type="Pfam" id="PF00009">
    <property type="entry name" value="GTP_EFTU"/>
    <property type="match status" value="1"/>
</dbReference>
<dbReference type="Pfam" id="PF03144">
    <property type="entry name" value="GTP_EFTU_D2"/>
    <property type="match status" value="1"/>
</dbReference>
<dbReference type="Pfam" id="PF03143">
    <property type="entry name" value="GTP_EFTU_D3"/>
    <property type="match status" value="1"/>
</dbReference>
<dbReference type="PRINTS" id="PR00315">
    <property type="entry name" value="ELONGATNFCT"/>
</dbReference>
<dbReference type="SUPFAM" id="SSF50465">
    <property type="entry name" value="EF-Tu/eEF-1alpha/eIF2-gamma C-terminal domain"/>
    <property type="match status" value="1"/>
</dbReference>
<dbReference type="SUPFAM" id="SSF52540">
    <property type="entry name" value="P-loop containing nucleoside triphosphate hydrolases"/>
    <property type="match status" value="1"/>
</dbReference>
<dbReference type="SUPFAM" id="SSF50447">
    <property type="entry name" value="Translation proteins"/>
    <property type="match status" value="1"/>
</dbReference>
<dbReference type="PROSITE" id="PS00301">
    <property type="entry name" value="G_TR_1"/>
    <property type="match status" value="1"/>
</dbReference>
<dbReference type="PROSITE" id="PS51722">
    <property type="entry name" value="G_TR_2"/>
    <property type="match status" value="1"/>
</dbReference>
<proteinExistence type="inferred from homology"/>
<comment type="function">
    <text evidence="2">GTP hydrolase that promotes the GTP-dependent binding of aminoacyl-tRNA to the A-site of ribosomes during protein biosynthesis.</text>
</comment>
<comment type="catalytic activity">
    <reaction evidence="2">
        <text>GTP + H2O = GDP + phosphate + H(+)</text>
        <dbReference type="Rhea" id="RHEA:19669"/>
        <dbReference type="ChEBI" id="CHEBI:15377"/>
        <dbReference type="ChEBI" id="CHEBI:15378"/>
        <dbReference type="ChEBI" id="CHEBI:37565"/>
        <dbReference type="ChEBI" id="CHEBI:43474"/>
        <dbReference type="ChEBI" id="CHEBI:58189"/>
        <dbReference type="EC" id="3.6.5.3"/>
    </reaction>
    <physiologicalReaction direction="left-to-right" evidence="2">
        <dbReference type="Rhea" id="RHEA:19670"/>
    </physiologicalReaction>
</comment>
<comment type="subunit">
    <text evidence="2">Monomer.</text>
</comment>
<comment type="subcellular location">
    <subcellularLocation>
        <location evidence="2">Cytoplasm</location>
    </subcellularLocation>
</comment>
<comment type="similarity">
    <text evidence="2">Belongs to the TRAFAC class translation factor GTPase superfamily. Classic translation factor GTPase family. EF-Tu/EF-1A subfamily.</text>
</comment>